<organism>
    <name type="scientific">Enterobacteria phage T4</name>
    <name type="common">Bacteriophage T4</name>
    <dbReference type="NCBI Taxonomy" id="10665"/>
    <lineage>
        <taxon>Viruses</taxon>
        <taxon>Duplodnaviria</taxon>
        <taxon>Heunggongvirae</taxon>
        <taxon>Uroviricota</taxon>
        <taxon>Caudoviricetes</taxon>
        <taxon>Straboviridae</taxon>
        <taxon>Tevenvirinae</taxon>
        <taxon>Tequatrovirus</taxon>
    </lineage>
</organism>
<reference key="1">
    <citation type="submission" date="1992-11" db="EMBL/GenBank/DDBJ databases">
        <authorList>
            <person name="Kaliman A.V."/>
            <person name="Khasanova M.A."/>
            <person name="Tanyashin V.I."/>
        </authorList>
    </citation>
    <scope>NUCLEOTIDE SEQUENCE [GENOMIC DNA]</scope>
</reference>
<reference key="2">
    <citation type="journal article" date="2003" name="Microbiol. Mol. Biol. Rev.">
        <title>Bacteriophage T4 genome.</title>
        <authorList>
            <person name="Miller E.S."/>
            <person name="Kutter E."/>
            <person name="Mosig G."/>
            <person name="Arisaka F."/>
            <person name="Kunisawa T."/>
            <person name="Ruger W."/>
        </authorList>
    </citation>
    <scope>NUCLEOTIDE SEQUENCE [LARGE SCALE GENOMIC DNA]</scope>
</reference>
<reference key="3">
    <citation type="journal article" date="2002" name="Proc. Natl. Acad. Sci. U.S.A.">
        <title>Bacteriophage T4 RNA ligase 2 (gp24.1) exemplifies a family of RNA ligases found in all phylogenetic domains.</title>
        <authorList>
            <person name="Ho C.K."/>
            <person name="Shuman S."/>
        </authorList>
    </citation>
    <scope>FUNCTION</scope>
    <scope>CATALYTIC ACTIVITY</scope>
    <scope>MUTAGENESIS OF LYS-35; HIS-37; GLU-204; LYS-225 AND LYS-227</scope>
</reference>
<reference key="4">
    <citation type="journal article" date="2003" name="J. Biol. Chem.">
        <title>Structure-function analysis of T4 RNA ligase 2.</title>
        <authorList>
            <person name="Yin S."/>
            <person name="Ho C.K."/>
            <person name="Shuman S."/>
        </authorList>
    </citation>
    <scope>MUTAGENESIS OF GLU-34; LYS-35; HIS-37; ASN-40; ARG-55; GLU-99; PHE-119; ASP-120; LYS-189; LYS-209 AND LYS-227</scope>
    <scope>CATALYTIC ACTIVITY</scope>
    <scope>FUNCTION</scope>
</reference>
<reference key="5">
    <citation type="journal article" date="2004" name="Mol. Cell">
        <title>How an RNA ligase discriminates RNA versus DNA damage.</title>
        <authorList>
            <person name="Nandakumar J."/>
            <person name="Shuman S."/>
        </authorList>
    </citation>
    <scope>FUNCTION</scope>
</reference>
<reference key="6">
    <citation type="journal article" date="2004" name="J. Biol. Chem.">
        <title>RNA substrate specificity and structure-guided mutational analysis of bacteriophage T4 RNA ligase 2.</title>
        <authorList>
            <person name="Nandakumar J."/>
            <person name="Ho C.K."/>
            <person name="Lima C.D."/>
            <person name="Shuman S."/>
        </authorList>
    </citation>
    <scope>COFACTOR</scope>
</reference>
<reference key="7">
    <citation type="journal article" date="2005" name="J. Biol. Chem.">
        <title>Dual mechanisms whereby a broken RNA end assists the catalysis of its repair by T4 RNA ligase 2.</title>
        <authorList>
            <person name="Nandakumar J."/>
            <person name="Shuman S."/>
        </authorList>
    </citation>
    <scope>FUNCTION</scope>
    <scope>COFACTOR</scope>
</reference>
<reference key="8">
    <citation type="journal article" date="2006" name="Biochem. J.">
        <title>Direct comparison of nick-joining activity of the nucleic acid ligases from bacteriophage T4.</title>
        <authorList>
            <person name="Bullard D.R."/>
            <person name="Bowater R.P."/>
        </authorList>
    </citation>
    <scope>BIOPHYSICOCHEMICAL PROPERTIES</scope>
    <scope>FUNCTION</scope>
    <scope>CATALYTIC ACTIVITY</scope>
</reference>
<reference key="9">
    <citation type="journal article" date="2013" name="RNA">
        <title>Kinetic mechanism of nick sealing by T4 RNA ligase 2 and effects of 3'-OH base mispairs and damaged base lesions.</title>
        <authorList>
            <person name="Chauleau M."/>
            <person name="Shuman S."/>
        </authorList>
    </citation>
    <scope>FUNCTION</scope>
    <scope>CATALYTIC ACTIVITY</scope>
</reference>
<reference evidence="13" key="10">
    <citation type="journal article" date="2004" name="Structure">
        <title>Structure and mechanism of RNA ligase.</title>
        <authorList>
            <person name="Ho C.K."/>
            <person name="Wang L.K."/>
            <person name="Lima C.D."/>
            <person name="Shuman S."/>
        </authorList>
    </citation>
    <scope>X-RAY CRYSTALLOGRAPHY (1.9 ANGSTROMS) OF 1-249 IN COMPLEX WITH AMP</scope>
    <scope>DOMAIN</scope>
</reference>
<reference evidence="14 15 16" key="11">
    <citation type="journal article" date="2006" name="Cell">
        <title>RNA ligase structures reveal the basis for RNA specificity and conformational changes that drive ligation forward.</title>
        <authorList>
            <person name="Nandakumar J."/>
            <person name="Shuman S."/>
            <person name="Lima C.D."/>
        </authorList>
    </citation>
    <scope>X-RAY CRYSTALLOGRAPHY (2.40 ANGSTROMS) IN COMPLEX WITH AMP; MAGNESIUM; ATP AND RNA SUBSTRATE</scope>
    <scope>FUNCTION</scope>
    <scope>CATALYTIC ACTIVITY</scope>
    <scope>MUTAGENESIS OF THR-39; PHE-65 AND PHE-66</scope>
    <scope>ACTIVE SITE</scope>
    <scope>COFACTOR</scope>
    <scope>DOMAIN</scope>
</reference>
<sequence length="334" mass="37627">MFKKYSSLENHYNSKFIEKLYSLGLTGGEWVAREKIHGTNFSLIIERDKVTCAKRTGPILPAEDFFGYEIILKNYADSIKAVQDIMETSAVVSYQVFGEFAGPGIQKNVDYCDKDFYVFDIIVTTESGDVTYVDDYMMESFCNTFKFKMAPLLGRGKFEELIKLPNDLDSVVQDYNFTVDHAGLVDANKCVWNAEAKGEVFTAEGYVLKPCYPSWLRNGNRVAIKCKNSKFSEKKKSDKPIKAKVELSEADNKLVGILACYVTLNRVNNVISKIGEIGPKDFGKVMGLTVQDILEETSREGITLTQADNPSLIKKELVKMVQDVLRPAWIELVS</sequence>
<keyword id="KW-0002">3D-structure</keyword>
<keyword id="KW-0067">ATP-binding</keyword>
<keyword id="KW-0436">Ligase</keyword>
<keyword id="KW-0460">Magnesium</keyword>
<keyword id="KW-0479">Metal-binding</keyword>
<keyword id="KW-0547">Nucleotide-binding</keyword>
<keyword id="KW-1185">Reference proteome</keyword>
<keyword id="KW-0692">RNA repair</keyword>
<organismHost>
    <name type="scientific">Escherichia coli</name>
    <dbReference type="NCBI Taxonomy" id="562"/>
</organismHost>
<protein>
    <recommendedName>
        <fullName evidence="1">RNA ligase 2</fullName>
        <ecNumber evidence="1 2 3 8 9 10">6.5.1.3</ecNumber>
    </recommendedName>
    <alternativeName>
        <fullName evidence="1">Rnl2</fullName>
    </alternativeName>
</protein>
<gene>
    <name type="primary">Y10A</name>
    <name type="synonym">24.1</name>
</gene>
<comment type="function">
    <text evidence="1 3 6 7 8 10 11 12">Repairs 3'-OH/5'-PO4 nicks in duplex RNA or RNA:DNA hybrid in which the broken 3'-OH strand is RNA (Probable) (PubMed:12611899, PubMed:15494308, PubMed:15851476, PubMed:16671895, PubMed:24158792). The nick ligation reaction entails three nucleotidyl transfer steps (PubMed:15851476, PubMed:24158792). In the first step, the RNA ligase reacts with ATP in the absence of nucleic acid to form a covalent ligase-AMP intermediate and release pyrophosphate (PubMed:15851476, PubMed:24158792). In step 2, the ligase-AMP binds to the nicked duplex nucleic acid and transfers the adenylate to the 5'-PO4 terminus to form an adenylylated nicked intermediate (PubMed:15851476, PubMed:24158792). In step 3, the RNA ligase directs the attack of the nick 3'-OH on the 5'-phosphoanhydride linkage, resulting in a repaired 3' - 5' phosphodiester and release of AMP (PubMed:15851476, PubMed:24158792).</text>
</comment>
<comment type="catalytic activity">
    <reaction evidence="1 2 3 8 9 10">
        <text>ATP + (ribonucleotide)n-3'-hydroxyl + 5'-phospho-(ribonucleotide)m = (ribonucleotide)n+m + AMP + diphosphate.</text>
        <dbReference type="EC" id="6.5.1.3"/>
    </reaction>
</comment>
<comment type="cofactor">
    <cofactor evidence="1 5 7 9">
        <name>Mg(2+)</name>
        <dbReference type="ChEBI" id="CHEBI:18420"/>
    </cofactor>
    <cofactor evidence="1 5">
        <name>Mn(2+)</name>
        <dbReference type="ChEBI" id="CHEBI:29035"/>
    </cofactor>
    <text evidence="1 12">Binds 2 magnesium ions that may perform the catalytic activity via a two-metal mechanism.</text>
</comment>
<comment type="biophysicochemical properties">
    <phDependence>
        <text evidence="8">Optimum pH is 7.</text>
    </phDependence>
</comment>
<comment type="domain">
    <text evidence="1 4 9">The adenylyltransferase domain in the N-terminus performs step 1 and step 3 reactions (PubMed:14962393). The C-terminus domain is required for step 2 of the ligation pathway (PubMed:14962393, PubMed:17018278).</text>
</comment>
<comment type="similarity">
    <text evidence="1">Belongs to the RNA ligase 2 family.</text>
</comment>
<feature type="chain" id="PRO_0000165156" description="RNA ligase 2">
    <location>
        <begin position="1"/>
        <end position="334"/>
    </location>
</feature>
<feature type="region of interest" description="Adenylyltransferase" evidence="1">
    <location>
        <begin position="1"/>
        <end position="234"/>
    </location>
</feature>
<feature type="active site" description="N6-AMP-lysine intermediate" evidence="1 9">
    <location>
        <position position="35"/>
    </location>
</feature>
<feature type="binding site" evidence="1 4 9">
    <location>
        <position position="34"/>
    </location>
    <ligand>
        <name>AMP</name>
        <dbReference type="ChEBI" id="CHEBI:456215"/>
    </ligand>
</feature>
<feature type="binding site" evidence="4 9">
    <location>
        <position position="35"/>
    </location>
    <ligand>
        <name>AMP</name>
        <dbReference type="ChEBI" id="CHEBI:456215"/>
    </ligand>
</feature>
<feature type="binding site" evidence="1 4 9">
    <location>
        <position position="36"/>
    </location>
    <ligand>
        <name>AMP</name>
        <dbReference type="ChEBI" id="CHEBI:456215"/>
    </ligand>
</feature>
<feature type="binding site" evidence="1 4 9">
    <location>
        <position position="40"/>
    </location>
    <ligand>
        <name>AMP</name>
        <dbReference type="ChEBI" id="CHEBI:456215"/>
    </ligand>
</feature>
<feature type="binding site" evidence="1 4">
    <location>
        <position position="55"/>
    </location>
    <ligand>
        <name>AMP</name>
        <dbReference type="ChEBI" id="CHEBI:456215"/>
    </ligand>
</feature>
<feature type="binding site" evidence="1 4 9">
    <location>
        <position position="99"/>
    </location>
    <ligand>
        <name>AMP</name>
        <dbReference type="ChEBI" id="CHEBI:456215"/>
    </ligand>
</feature>
<feature type="binding site" evidence="1 9">
    <location>
        <position position="162"/>
    </location>
    <ligand>
        <name>Mg(2+)</name>
        <dbReference type="ChEBI" id="CHEBI:18420"/>
        <label>2</label>
    </ligand>
</feature>
<feature type="binding site" evidence="1 9">
    <location>
        <position position="164"/>
    </location>
    <ligand>
        <name>Mg(2+)</name>
        <dbReference type="ChEBI" id="CHEBI:18420"/>
        <label>2</label>
    </ligand>
</feature>
<feature type="binding site" evidence="1 9">
    <location>
        <position position="166"/>
    </location>
    <ligand>
        <name>Mg(2+)</name>
        <dbReference type="ChEBI" id="CHEBI:18420"/>
        <label>2</label>
    </ligand>
</feature>
<feature type="binding site" evidence="1 9">
    <location>
        <position position="204"/>
    </location>
    <ligand>
        <name>Mg(2+)</name>
        <dbReference type="ChEBI" id="CHEBI:18420"/>
        <label>1</label>
    </ligand>
</feature>
<feature type="binding site" evidence="1 9">
    <location>
        <position position="206"/>
    </location>
    <ligand>
        <name>Mg(2+)</name>
        <dbReference type="ChEBI" id="CHEBI:18420"/>
        <label>2</label>
    </ligand>
</feature>
<feature type="binding site" evidence="1 4 9">
    <location>
        <position position="225"/>
    </location>
    <ligand>
        <name>AMP</name>
        <dbReference type="ChEBI" id="CHEBI:456215"/>
    </ligand>
</feature>
<feature type="binding site" evidence="1 4 9">
    <location>
        <position position="227"/>
    </location>
    <ligand>
        <name>AMP</name>
        <dbReference type="ChEBI" id="CHEBI:456215"/>
    </ligand>
</feature>
<feature type="site" description="Interaction with RNA" evidence="1">
    <location>
        <position position="218"/>
    </location>
</feature>
<feature type="site" description="Interaction with RNA" evidence="1">
    <location>
        <position position="314"/>
    </location>
</feature>
<feature type="mutagenesis site" description="Complete loss of adenylyltransferase activity and RNA ligation." evidence="3">
    <original>E</original>
    <variation>A</variation>
    <variation>D</variation>
    <location>
        <position position="34"/>
    </location>
</feature>
<feature type="mutagenesis site" description="Almost complete loss of adenylyltransferase activity and RNA ligation." evidence="3">
    <original>E</original>
    <variation>Q</variation>
    <location>
        <position position="34"/>
    </location>
</feature>
<feature type="mutagenesis site" description="Complete loss of RNA ligase activity in vitro. Complete loss of ligase-AMP formation and RNA-adenylate intermediate." evidence="2 3">
    <original>K</original>
    <variation>A</variation>
    <location>
        <position position="35"/>
    </location>
</feature>
<feature type="mutagenesis site" description="No effect on RNA ligase activity in vitro." evidence="2 3">
    <original>H</original>
    <variation>D</variation>
    <location>
        <position position="37"/>
    </location>
</feature>
<feature type="mutagenesis site" description="No effect on RNA ligase activity." evidence="9">
    <original>T</original>
    <variation>A</variation>
    <location>
        <position position="39"/>
    </location>
</feature>
<feature type="mutagenesis site" description="85% loss of adenylyltransferase activity." evidence="3">
    <original>N</original>
    <variation>A</variation>
    <location>
        <position position="40"/>
    </location>
</feature>
<feature type="mutagenesis site" description="No effect on adenylyltransferase activity and RNA ligation." evidence="3">
    <original>N</original>
    <variation>D</variation>
    <location>
        <position position="40"/>
    </location>
</feature>
<feature type="mutagenesis site" description="80% loss of adenylyltransferase activity and RNA ligation." evidence="3">
    <original>N</original>
    <variation>Q</variation>
    <location>
        <position position="40"/>
    </location>
</feature>
<feature type="mutagenesis site" description="Complete loss of adenylyltransferase activity and RNA ligation." evidence="3">
    <original>N</original>
    <variation>R</variation>
    <location>
        <position position="40"/>
    </location>
</feature>
<feature type="mutagenesis site" description="Almost complete loss of adenylyltransferase activity and RNA ligation." evidence="3">
    <original>R</original>
    <variation>A</variation>
    <variation>Q</variation>
    <location>
        <position position="55"/>
    </location>
</feature>
<feature type="mutagenesis site" description="Strongly reduced RNA ligase activity." evidence="9">
    <original>F</original>
    <variation>A</variation>
    <location>
        <position position="65"/>
    </location>
</feature>
<feature type="mutagenesis site" description="Strongly reduced RNA ligase activity." evidence="9">
    <original>F</original>
    <variation>A</variation>
    <location>
        <position position="66"/>
    </location>
</feature>
<feature type="mutagenesis site" description="Complete loss of adenylyltransferase activity and RNA ligation." evidence="3">
    <original>E</original>
    <variation>A</variation>
    <variation>D</variation>
    <variation>Q</variation>
    <location>
        <position position="99"/>
    </location>
</feature>
<feature type="mutagenesis site" description="Complete loss of adenylyltransferase activity and RNA ligation." evidence="3">
    <original>F</original>
    <variation>A</variation>
    <location>
        <position position="119"/>
    </location>
</feature>
<feature type="mutagenesis site" description="Complete loss of adenylyltransferase activity. Partial loss of RNA ligation." evidence="3">
    <original>F</original>
    <variation>L</variation>
    <location>
        <position position="119"/>
    </location>
</feature>
<feature type="mutagenesis site" description="Complete loss of adenylyltransferase activity and RNA ligation." evidence="3">
    <original>D</original>
    <variation>A</variation>
    <variation>N</variation>
    <location>
        <position position="120"/>
    </location>
</feature>
<feature type="mutagenesis site" description="88% loss of adenylyltransferase activity. Partial loss of RNA ligation." evidence="3">
    <original>D</original>
    <variation>E</variation>
    <location>
        <position position="120"/>
    </location>
</feature>
<feature type="mutagenesis site" description="30% loss of adenylyltransferase activity. No effect on RNA ligation." evidence="3">
    <original>K</original>
    <variation>A</variation>
    <location>
        <position position="189"/>
    </location>
</feature>
<feature type="mutagenesis site" description="Complete loss of RNA ligase activity in vitro." evidence="2">
    <original>E</original>
    <variation>A</variation>
    <location>
        <position position="204"/>
    </location>
</feature>
<feature type="mutagenesis site" description="Almost complete loss of adenylyltransferase activity." evidence="3">
    <original>K</original>
    <variation>A</variation>
    <location>
        <position position="209"/>
    </location>
</feature>
<feature type="mutagenesis site" description="Complete loss of RNA ligase activity in vitro." evidence="2">
    <original>K</original>
    <variation>A</variation>
    <location>
        <position position="225"/>
    </location>
</feature>
<feature type="mutagenesis site" description="Complete loss of RNA ligase activity in vitro. Almost complete loss of adenylyltransferase activity and RNA ligation." evidence="2 3">
    <original>K</original>
    <variation>A</variation>
    <location>
        <position position="227"/>
    </location>
</feature>
<feature type="mutagenesis site" description="Complete loss of RNA ligase activity in vitro. Almost complete loss of adenylyltransferase activity. Partial loss of RNA ligation." evidence="3">
    <original>K</original>
    <variation>R</variation>
    <variation>Q</variation>
    <location>
        <position position="227"/>
    </location>
</feature>
<feature type="helix" evidence="17">
    <location>
        <begin position="14"/>
        <end position="23"/>
    </location>
</feature>
<feature type="strand" evidence="17">
    <location>
        <begin position="30"/>
        <end position="34"/>
    </location>
</feature>
<feature type="strand" evidence="17">
    <location>
        <begin position="38"/>
        <end position="48"/>
    </location>
</feature>
<feature type="strand" evidence="17">
    <location>
        <begin position="50"/>
        <end position="54"/>
    </location>
</feature>
<feature type="turn" evidence="17">
    <location>
        <begin position="66"/>
        <end position="68"/>
    </location>
</feature>
<feature type="helix" evidence="17">
    <location>
        <begin position="69"/>
        <end position="74"/>
    </location>
</feature>
<feature type="helix" evidence="17">
    <location>
        <begin position="76"/>
        <end position="89"/>
    </location>
</feature>
<feature type="strand" evidence="17">
    <location>
        <begin position="91"/>
        <end position="102"/>
    </location>
</feature>
<feature type="turn" evidence="17">
    <location>
        <begin position="103"/>
        <end position="105"/>
    </location>
</feature>
<feature type="strand" evidence="17">
    <location>
        <begin position="106"/>
        <end position="108"/>
    </location>
</feature>
<feature type="strand" evidence="17">
    <location>
        <begin position="115"/>
        <end position="125"/>
    </location>
</feature>
<feature type="strand" evidence="17">
    <location>
        <begin position="130"/>
        <end position="132"/>
    </location>
</feature>
<feature type="helix" evidence="17">
    <location>
        <begin position="135"/>
        <end position="145"/>
    </location>
</feature>
<feature type="strand" evidence="17">
    <location>
        <begin position="148"/>
        <end position="150"/>
    </location>
</feature>
<feature type="strand" evidence="17">
    <location>
        <begin position="152"/>
        <end position="156"/>
    </location>
</feature>
<feature type="helix" evidence="17">
    <location>
        <begin position="158"/>
        <end position="161"/>
    </location>
</feature>
<feature type="helix" evidence="17">
    <location>
        <begin position="172"/>
        <end position="182"/>
    </location>
</feature>
<feature type="helix" evidence="17">
    <location>
        <begin position="184"/>
        <end position="189"/>
    </location>
</feature>
<feature type="strand" evidence="18">
    <location>
        <begin position="198"/>
        <end position="200"/>
    </location>
</feature>
<feature type="strand" evidence="17">
    <location>
        <begin position="205"/>
        <end position="212"/>
    </location>
</feature>
<feature type="strand" evidence="17">
    <location>
        <begin position="224"/>
        <end position="227"/>
    </location>
</feature>
<feature type="helix" evidence="17">
    <location>
        <begin position="229"/>
        <end position="231"/>
    </location>
</feature>
<feature type="helix" evidence="18">
    <location>
        <begin position="249"/>
        <end position="258"/>
    </location>
</feature>
<feature type="helix" evidence="18">
    <location>
        <begin position="259"/>
        <end position="261"/>
    </location>
</feature>
<feature type="helix" evidence="18">
    <location>
        <begin position="264"/>
        <end position="272"/>
    </location>
</feature>
<feature type="helix" evidence="18">
    <location>
        <begin position="282"/>
        <end position="299"/>
    </location>
</feature>
<feature type="strand" evidence="18">
    <location>
        <begin position="305"/>
        <end position="308"/>
    </location>
</feature>
<feature type="helix" evidence="18">
    <location>
        <begin position="310"/>
        <end position="323"/>
    </location>
</feature>
<feature type="turn" evidence="18">
    <location>
        <begin position="324"/>
        <end position="327"/>
    </location>
</feature>
<feature type="turn" evidence="19">
    <location>
        <begin position="329"/>
        <end position="331"/>
    </location>
</feature>
<name>RLIG2_BPT4</name>
<evidence type="ECO:0000255" key="1">
    <source>
        <dbReference type="HAMAP-Rule" id="MF_04150"/>
    </source>
</evidence>
<evidence type="ECO:0000269" key="2">
    <source>
    </source>
</evidence>
<evidence type="ECO:0000269" key="3">
    <source>
    </source>
</evidence>
<evidence type="ECO:0000269" key="4">
    <source>
    </source>
</evidence>
<evidence type="ECO:0000269" key="5">
    <source>
    </source>
</evidence>
<evidence type="ECO:0000269" key="6">
    <source>
    </source>
</evidence>
<evidence type="ECO:0000269" key="7">
    <source>
    </source>
</evidence>
<evidence type="ECO:0000269" key="8">
    <source>
    </source>
</evidence>
<evidence type="ECO:0000269" key="9">
    <source>
    </source>
</evidence>
<evidence type="ECO:0000269" key="10">
    <source>
    </source>
</evidence>
<evidence type="ECO:0000305" key="11">
    <source>
    </source>
</evidence>
<evidence type="ECO:0000305" key="12">
    <source>
    </source>
</evidence>
<evidence type="ECO:0007744" key="13">
    <source>
        <dbReference type="PDB" id="1S68"/>
    </source>
</evidence>
<evidence type="ECO:0007744" key="14">
    <source>
        <dbReference type="PDB" id="2HVQ"/>
    </source>
</evidence>
<evidence type="ECO:0007744" key="15">
    <source>
        <dbReference type="PDB" id="2HVR"/>
    </source>
</evidence>
<evidence type="ECO:0007744" key="16">
    <source>
        <dbReference type="PDB" id="2HVS"/>
    </source>
</evidence>
<evidence type="ECO:0007829" key="17">
    <source>
        <dbReference type="PDB" id="1S68"/>
    </source>
</evidence>
<evidence type="ECO:0007829" key="18">
    <source>
        <dbReference type="PDB" id="2HVQ"/>
    </source>
</evidence>
<evidence type="ECO:0007829" key="19">
    <source>
        <dbReference type="PDB" id="2HVR"/>
    </source>
</evidence>
<dbReference type="EC" id="6.5.1.3" evidence="1 2 3 8 9 10"/>
<dbReference type="EMBL" id="X69459">
    <property type="protein sequence ID" value="CAA49218.1"/>
    <property type="molecule type" value="Genomic_DNA"/>
</dbReference>
<dbReference type="EMBL" id="AF158101">
    <property type="protein sequence ID" value="AAD42430.1"/>
    <property type="molecule type" value="Genomic_DNA"/>
</dbReference>
<dbReference type="PIR" id="S28563">
    <property type="entry name" value="S28563"/>
</dbReference>
<dbReference type="RefSeq" id="NP_049790.1">
    <property type="nucleotide sequence ID" value="NC_000866.4"/>
</dbReference>
<dbReference type="PDB" id="1S68">
    <property type="method" value="X-ray"/>
    <property type="resolution" value="1.90 A"/>
    <property type="chains" value="A=1-249"/>
</dbReference>
<dbReference type="PDB" id="2HVQ">
    <property type="method" value="X-ray"/>
    <property type="resolution" value="2.40 A"/>
    <property type="chains" value="A=1-334"/>
</dbReference>
<dbReference type="PDB" id="2HVR">
    <property type="method" value="X-ray"/>
    <property type="resolution" value="2.45 A"/>
    <property type="chains" value="A/B=1-334"/>
</dbReference>
<dbReference type="PDB" id="2HVS">
    <property type="method" value="X-ray"/>
    <property type="resolution" value="2.50 A"/>
    <property type="chains" value="A/B=1-334"/>
</dbReference>
<dbReference type="PDBsum" id="1S68"/>
<dbReference type="PDBsum" id="2HVQ"/>
<dbReference type="PDBsum" id="2HVR"/>
<dbReference type="PDBsum" id="2HVS"/>
<dbReference type="SMR" id="P32277"/>
<dbReference type="GeneID" id="1258563"/>
<dbReference type="KEGG" id="vg:1258563"/>
<dbReference type="OrthoDB" id="15759at10239"/>
<dbReference type="BioCyc" id="MetaCyc:MONOMER-19918"/>
<dbReference type="BRENDA" id="6.5.1.3">
    <property type="organism ID" value="732"/>
</dbReference>
<dbReference type="EvolutionaryTrace" id="P32277"/>
<dbReference type="Proteomes" id="UP000009087">
    <property type="component" value="Segment"/>
</dbReference>
<dbReference type="GO" id="GO:0005524">
    <property type="term" value="F:ATP binding"/>
    <property type="evidence" value="ECO:0007669"/>
    <property type="project" value="UniProtKB-UniRule"/>
</dbReference>
<dbReference type="GO" id="GO:0046872">
    <property type="term" value="F:metal ion binding"/>
    <property type="evidence" value="ECO:0007669"/>
    <property type="project" value="UniProtKB-UniRule"/>
</dbReference>
<dbReference type="GO" id="GO:0003972">
    <property type="term" value="F:RNA ligase (ATP) activity"/>
    <property type="evidence" value="ECO:0007669"/>
    <property type="project" value="UniProtKB-UniRule"/>
</dbReference>
<dbReference type="GO" id="GO:0042245">
    <property type="term" value="P:RNA repair"/>
    <property type="evidence" value="ECO:0007669"/>
    <property type="project" value="UniProtKB-UniRule"/>
</dbReference>
<dbReference type="Gene3D" id="3.30.1490.70">
    <property type="match status" value="1"/>
</dbReference>
<dbReference type="Gene3D" id="3.30.470.30">
    <property type="entry name" value="DNA ligase/mRNA capping enzyme"/>
    <property type="match status" value="1"/>
</dbReference>
<dbReference type="Gene3D" id="1.10.10.1810">
    <property type="entry name" value="RNA ligase"/>
    <property type="match status" value="1"/>
</dbReference>
<dbReference type="HAMAP" id="MF_04150">
    <property type="entry name" value="RNALIG2_T4"/>
    <property type="match status" value="1"/>
</dbReference>
<dbReference type="InterPro" id="IPR012647">
    <property type="entry name" value="RNA_lig_RNL2"/>
</dbReference>
<dbReference type="InterPro" id="IPR021122">
    <property type="entry name" value="RNA_ligase_dom_REL/Rnl2"/>
</dbReference>
<dbReference type="InterPro" id="IPR041948">
    <property type="entry name" value="Rnl1/2_C_sf"/>
</dbReference>
<dbReference type="InterPro" id="IPR040609">
    <property type="entry name" value="Rnl2_C"/>
</dbReference>
<dbReference type="InterPro" id="IPR044263">
    <property type="entry name" value="Rnl2_vir"/>
</dbReference>
<dbReference type="NCBIfam" id="TIGR02307">
    <property type="entry name" value="RNA_lig_RNL2"/>
    <property type="match status" value="1"/>
</dbReference>
<dbReference type="Pfam" id="PF09414">
    <property type="entry name" value="RNA_ligase"/>
    <property type="match status" value="1"/>
</dbReference>
<dbReference type="Pfam" id="PF18043">
    <property type="entry name" value="T4_Rnl2_C"/>
    <property type="match status" value="1"/>
</dbReference>
<dbReference type="SUPFAM" id="SSF56091">
    <property type="entry name" value="DNA ligase/mRNA capping enzyme, catalytic domain"/>
    <property type="match status" value="1"/>
</dbReference>
<proteinExistence type="evidence at protein level"/>
<accession>P32277</accession>